<reference key="1">
    <citation type="journal article" date="2009" name="Proc. Natl. Acad. Sci. U.S.A.">
        <title>Biogeography of the Sulfolobus islandicus pan-genome.</title>
        <authorList>
            <person name="Reno M.L."/>
            <person name="Held N.L."/>
            <person name="Fields C.J."/>
            <person name="Burke P.V."/>
            <person name="Whitaker R.J."/>
        </authorList>
    </citation>
    <scope>NUCLEOTIDE SEQUENCE [LARGE SCALE GENOMIC DNA]</scope>
    <source>
        <strain>M.14.25 / Kamchatka #1</strain>
    </source>
</reference>
<organism>
    <name type="scientific">Saccharolobus islandicus (strain M.14.25 / Kamchatka #1)</name>
    <name type="common">Sulfolobus islandicus</name>
    <dbReference type="NCBI Taxonomy" id="427317"/>
    <lineage>
        <taxon>Archaea</taxon>
        <taxon>Thermoproteota</taxon>
        <taxon>Thermoprotei</taxon>
        <taxon>Sulfolobales</taxon>
        <taxon>Sulfolobaceae</taxon>
        <taxon>Saccharolobus</taxon>
    </lineage>
</organism>
<gene>
    <name type="ordered locus">M1425_1245</name>
</gene>
<evidence type="ECO:0000250" key="1">
    <source>
        <dbReference type="UniProtKB" id="O87198"/>
    </source>
</evidence>
<evidence type="ECO:0000255" key="2">
    <source>
        <dbReference type="HAMAP-Rule" id="MF_02222"/>
    </source>
</evidence>
<evidence type="ECO:0000255" key="3">
    <source>
        <dbReference type="PROSITE-ProRule" id="PRU01151"/>
    </source>
</evidence>
<feature type="chain" id="PRO_1000213320" description="Homocitrate synthase">
    <location>
        <begin position="1"/>
        <end position="461"/>
    </location>
</feature>
<feature type="domain" description="Pyruvate carboxyltransferase" evidence="3">
    <location>
        <begin position="4"/>
        <end position="259"/>
    </location>
</feature>
<feature type="active site" description="Proton acceptor" evidence="1">
    <location>
        <position position="292"/>
    </location>
</feature>
<feature type="binding site" evidence="1">
    <location>
        <position position="12"/>
    </location>
    <ligand>
        <name>2-oxoglutarate</name>
        <dbReference type="ChEBI" id="CHEBI:16810"/>
    </ligand>
</feature>
<feature type="binding site" evidence="1">
    <location>
        <position position="13"/>
    </location>
    <ligand>
        <name>Mg(2+)</name>
        <dbReference type="ChEBI" id="CHEBI:18420"/>
    </ligand>
</feature>
<feature type="binding site" evidence="1">
    <location>
        <position position="76"/>
    </location>
    <ligand>
        <name>2-oxoglutarate</name>
        <dbReference type="ChEBI" id="CHEBI:16810"/>
    </ligand>
</feature>
<feature type="binding site" evidence="1">
    <location>
        <position position="136"/>
    </location>
    <ligand>
        <name>2-oxoglutarate</name>
        <dbReference type="ChEBI" id="CHEBI:16810"/>
    </ligand>
</feature>
<feature type="binding site" evidence="1">
    <location>
        <position position="170"/>
    </location>
    <ligand>
        <name>2-oxoglutarate</name>
        <dbReference type="ChEBI" id="CHEBI:16810"/>
    </ligand>
</feature>
<feature type="binding site" evidence="1">
    <location>
        <position position="198"/>
    </location>
    <ligand>
        <name>Mg(2+)</name>
        <dbReference type="ChEBI" id="CHEBI:18420"/>
    </ligand>
</feature>
<feature type="binding site" evidence="1">
    <location>
        <position position="200"/>
    </location>
    <ligand>
        <name>Mg(2+)</name>
        <dbReference type="ChEBI" id="CHEBI:18420"/>
    </ligand>
</feature>
<comment type="function">
    <text evidence="1">Catalyzes the aldol-type condensation of 2-oxoglutarate with acetyl-CoA to yield homocitrate. Carries out the first step of the alpha-aminoadipate (AAA) lysine biosynthesis pathway.</text>
</comment>
<comment type="catalytic activity">
    <reaction evidence="1">
        <text>acetyl-CoA + 2-oxoglutarate + H2O = (2R)-homocitrate + CoA + H(+)</text>
        <dbReference type="Rhea" id="RHEA:12929"/>
        <dbReference type="ChEBI" id="CHEBI:15377"/>
        <dbReference type="ChEBI" id="CHEBI:15378"/>
        <dbReference type="ChEBI" id="CHEBI:16810"/>
        <dbReference type="ChEBI" id="CHEBI:57287"/>
        <dbReference type="ChEBI" id="CHEBI:57288"/>
        <dbReference type="ChEBI" id="CHEBI:58884"/>
        <dbReference type="EC" id="2.3.3.14"/>
    </reaction>
    <physiologicalReaction direction="left-to-right" evidence="1">
        <dbReference type="Rhea" id="RHEA:12930"/>
    </physiologicalReaction>
</comment>
<comment type="cofactor">
    <cofactor evidence="1">
        <name>Mg(2+)</name>
        <dbReference type="ChEBI" id="CHEBI:18420"/>
    </cofactor>
    <cofactor evidence="1">
        <name>Mn(2+)</name>
        <dbReference type="ChEBI" id="CHEBI:29035"/>
    </cofactor>
</comment>
<comment type="pathway">
    <text evidence="1">Amino-acid biosynthesis; L-lysine biosynthesis via AAA pathway; L-alpha-aminoadipate from 2-oxoglutarate: step 1/5.</text>
</comment>
<comment type="similarity">
    <text evidence="2">Belongs to the alpha-IPM synthase/homocitrate synthase family. Homocitrate synthase LYS20/LYS21 subfamily.</text>
</comment>
<dbReference type="EC" id="2.3.3.14" evidence="1 2"/>
<dbReference type="EMBL" id="CP001400">
    <property type="protein sequence ID" value="ACP38000.1"/>
    <property type="molecule type" value="Genomic_DNA"/>
</dbReference>
<dbReference type="SMR" id="C3MYM1"/>
<dbReference type="KEGG" id="sia:M1425_1245"/>
<dbReference type="HOGENOM" id="CLU_022158_4_0_2"/>
<dbReference type="UniPathway" id="UPA00033">
    <property type="reaction ID" value="UER00028"/>
</dbReference>
<dbReference type="Proteomes" id="UP000001350">
    <property type="component" value="Chromosome"/>
</dbReference>
<dbReference type="GO" id="GO:0003852">
    <property type="term" value="F:2-isopropylmalate synthase activity"/>
    <property type="evidence" value="ECO:0007669"/>
    <property type="project" value="TreeGrafter"/>
</dbReference>
<dbReference type="GO" id="GO:0004410">
    <property type="term" value="F:homocitrate synthase activity"/>
    <property type="evidence" value="ECO:0007669"/>
    <property type="project" value="UniProtKB-UniRule"/>
</dbReference>
<dbReference type="GO" id="GO:0046872">
    <property type="term" value="F:metal ion binding"/>
    <property type="evidence" value="ECO:0007669"/>
    <property type="project" value="UniProtKB-KW"/>
</dbReference>
<dbReference type="GO" id="GO:0009098">
    <property type="term" value="P:L-leucine biosynthetic process"/>
    <property type="evidence" value="ECO:0007669"/>
    <property type="project" value="TreeGrafter"/>
</dbReference>
<dbReference type="GO" id="GO:0019878">
    <property type="term" value="P:lysine biosynthetic process via aminoadipic acid"/>
    <property type="evidence" value="ECO:0007669"/>
    <property type="project" value="UniProtKB-UniRule"/>
</dbReference>
<dbReference type="CDD" id="cd07940">
    <property type="entry name" value="DRE_TIM_IPMS"/>
    <property type="match status" value="1"/>
</dbReference>
<dbReference type="Gene3D" id="1.10.238.260">
    <property type="match status" value="1"/>
</dbReference>
<dbReference type="Gene3D" id="3.30.70.920">
    <property type="match status" value="1"/>
</dbReference>
<dbReference type="Gene3D" id="3.20.20.70">
    <property type="entry name" value="Aldolase class I"/>
    <property type="match status" value="1"/>
</dbReference>
<dbReference type="HAMAP" id="MF_02222">
    <property type="entry name" value="Homocitr_synth_fung_arch"/>
    <property type="match status" value="1"/>
</dbReference>
<dbReference type="InterPro" id="IPR050073">
    <property type="entry name" value="2-IPM_HCS-like"/>
</dbReference>
<dbReference type="InterPro" id="IPR002034">
    <property type="entry name" value="AIPM/Hcit_synth_CS"/>
</dbReference>
<dbReference type="InterPro" id="IPR013785">
    <property type="entry name" value="Aldolase_TIM"/>
</dbReference>
<dbReference type="InterPro" id="IPR011008">
    <property type="entry name" value="Dimeric_a/b-barrel"/>
</dbReference>
<dbReference type="InterPro" id="IPR011872">
    <property type="entry name" value="Homocitrate_synth"/>
</dbReference>
<dbReference type="InterPro" id="IPR054691">
    <property type="entry name" value="LeuA/HCS_post-cat"/>
</dbReference>
<dbReference type="InterPro" id="IPR000891">
    <property type="entry name" value="PYR_CT"/>
</dbReference>
<dbReference type="InterPro" id="IPR019887">
    <property type="entry name" value="Tscrpt_reg_AsnC/Lrp_C"/>
</dbReference>
<dbReference type="NCBIfam" id="TIGR02146">
    <property type="entry name" value="LysS_fung_arch"/>
    <property type="match status" value="1"/>
</dbReference>
<dbReference type="NCBIfam" id="NF002085">
    <property type="entry name" value="PRK00915.1-2"/>
    <property type="match status" value="1"/>
</dbReference>
<dbReference type="PANTHER" id="PTHR10277:SF63">
    <property type="entry name" value="HOMOCITRATE SYNTHASE"/>
    <property type="match status" value="1"/>
</dbReference>
<dbReference type="PANTHER" id="PTHR10277">
    <property type="entry name" value="HOMOCITRATE SYNTHASE-RELATED"/>
    <property type="match status" value="1"/>
</dbReference>
<dbReference type="Pfam" id="PF01037">
    <property type="entry name" value="AsnC_trans_reg"/>
    <property type="match status" value="1"/>
</dbReference>
<dbReference type="Pfam" id="PF22617">
    <property type="entry name" value="HCS_D2"/>
    <property type="match status" value="1"/>
</dbReference>
<dbReference type="Pfam" id="PF00682">
    <property type="entry name" value="HMGL-like"/>
    <property type="match status" value="1"/>
</dbReference>
<dbReference type="SUPFAM" id="SSF51569">
    <property type="entry name" value="Aldolase"/>
    <property type="match status" value="1"/>
</dbReference>
<dbReference type="SUPFAM" id="SSF54909">
    <property type="entry name" value="Dimeric alpha+beta barrel"/>
    <property type="match status" value="1"/>
</dbReference>
<dbReference type="PROSITE" id="PS00816">
    <property type="entry name" value="AIPM_HOMOCIT_SYNTH_2"/>
    <property type="match status" value="1"/>
</dbReference>
<dbReference type="PROSITE" id="PS50991">
    <property type="entry name" value="PYR_CT"/>
    <property type="match status" value="1"/>
</dbReference>
<protein>
    <recommendedName>
        <fullName evidence="2">Homocitrate synthase</fullName>
        <shortName evidence="2">HCS</shortName>
        <ecNumber evidence="1 2">2.3.3.14</ecNumber>
    </recommendedName>
</protein>
<accession>C3MYM1</accession>
<proteinExistence type="inferred from homology"/>
<sequence>MIKVGILDSTLREGEQTPGVIFTVDQRVEIAKALSDLGVSMIEAGHPAVSPDIYEGIKRIVKLKKEGIITSEIVGHSRAVKRDIEIAAELEVDRIAIFYGVSDLHLKAKHKATREEALRTIAETISYAKNHGVKVRFTAEDGSRTDFDFLVTVSKTARDAGADRVSIADTVGILYPSKTKELFSALTREVPNLEFDIHAHNDLGLAVANALAAIEGGATIIHATVNGLGERVGIVPLQQIAAAIKYHFGIEVVKLDKLQYVSSLVEKYSGIPMPPNYPITGDYAFLHKAGVHVAGVLNDPRTYEFMPPETFGRTRDYTIDKYTGKHALRDKYEKLGVKISDAEMDQILAKIKSNTTIRFYRDVDLLELAEEVTGRVLKPRPPEQIEALISVKCDSNVYTTSVTRRLSVINGVKEVMEISGDYDILVKVQAKDSNELNQIIESIRATKGVRSTLTSLVLKKM</sequence>
<name>HOSA_SACI4</name>
<keyword id="KW-0028">Amino-acid biosynthesis</keyword>
<keyword id="KW-0457">Lysine biosynthesis</keyword>
<keyword id="KW-0460">Magnesium</keyword>
<keyword id="KW-0464">Manganese</keyword>
<keyword id="KW-0479">Metal-binding</keyword>
<keyword id="KW-0808">Transferase</keyword>